<organism>
    <name type="scientific">Thermomonospora curvata</name>
    <dbReference type="NCBI Taxonomy" id="2020"/>
    <lineage>
        <taxon>Bacteria</taxon>
        <taxon>Bacillati</taxon>
        <taxon>Actinomycetota</taxon>
        <taxon>Actinomycetes</taxon>
        <taxon>Streptosporangiales</taxon>
        <taxon>Thermomonosporaceae</taxon>
        <taxon>Thermomonospora</taxon>
    </lineage>
</organism>
<feature type="chain" id="PRO_0000171245" description="Probable serine/threonine-protein kinase PkwA">
    <location>
        <begin position="1"/>
        <end position="742"/>
    </location>
</feature>
<feature type="domain" description="Protein kinase" evidence="1">
    <location>
        <begin position="16"/>
        <end position="266"/>
    </location>
</feature>
<feature type="repeat" description="WD 1">
    <location>
        <begin position="455"/>
        <end position="496"/>
    </location>
</feature>
<feature type="repeat" description="WD 2">
    <location>
        <begin position="497"/>
        <end position="538"/>
    </location>
</feature>
<feature type="repeat" description="WD 3">
    <location>
        <begin position="539"/>
        <end position="580"/>
    </location>
</feature>
<feature type="repeat" description="WD 4">
    <location>
        <begin position="581"/>
        <end position="621"/>
    </location>
</feature>
<feature type="repeat" description="WD 5">
    <location>
        <begin position="622"/>
        <end position="663"/>
    </location>
</feature>
<feature type="repeat" description="WD 6">
    <location>
        <begin position="664"/>
        <end position="705"/>
    </location>
</feature>
<feature type="repeat" description="WD 7">
    <location>
        <begin position="706"/>
        <end position="742"/>
    </location>
</feature>
<feature type="region of interest" description="Disordered" evidence="3">
    <location>
        <begin position="266"/>
        <end position="394"/>
    </location>
</feature>
<feature type="compositionally biased region" description="Pro residues" evidence="3">
    <location>
        <begin position="301"/>
        <end position="318"/>
    </location>
</feature>
<feature type="compositionally biased region" description="Basic and acidic residues" evidence="3">
    <location>
        <begin position="343"/>
        <end position="356"/>
    </location>
</feature>
<feature type="compositionally biased region" description="Pro residues" evidence="3">
    <location>
        <begin position="377"/>
        <end position="392"/>
    </location>
</feature>
<feature type="active site" description="Proton acceptor" evidence="1 2">
    <location>
        <position position="138"/>
    </location>
</feature>
<feature type="binding site" evidence="1">
    <location>
        <begin position="22"/>
        <end position="30"/>
    </location>
    <ligand>
        <name>ATP</name>
        <dbReference type="ChEBI" id="CHEBI:30616"/>
    </ligand>
</feature>
<feature type="binding site" evidence="1">
    <location>
        <position position="44"/>
    </location>
    <ligand>
        <name>ATP</name>
        <dbReference type="ChEBI" id="CHEBI:30616"/>
    </ligand>
</feature>
<feature type="strand" evidence="4">
    <location>
        <begin position="454"/>
        <end position="456"/>
    </location>
</feature>
<feature type="strand" evidence="4">
    <location>
        <begin position="462"/>
        <end position="467"/>
    </location>
</feature>
<feature type="strand" evidence="4">
    <location>
        <begin position="471"/>
        <end position="478"/>
    </location>
</feature>
<feature type="strand" evidence="4">
    <location>
        <begin position="483"/>
        <end position="491"/>
    </location>
</feature>
<feature type="strand" evidence="4">
    <location>
        <begin position="493"/>
        <end position="497"/>
    </location>
</feature>
<feature type="strand" evidence="4">
    <location>
        <begin position="504"/>
        <end position="509"/>
    </location>
</feature>
<feature type="strand" evidence="4">
    <location>
        <begin position="513"/>
        <end position="520"/>
    </location>
</feature>
<feature type="strand" evidence="4">
    <location>
        <begin position="523"/>
        <end position="529"/>
    </location>
</feature>
<feature type="turn" evidence="4">
    <location>
        <begin position="531"/>
        <end position="533"/>
    </location>
</feature>
<feature type="strand" evidence="4">
    <location>
        <begin position="538"/>
        <end position="541"/>
    </location>
</feature>
<feature type="strand" evidence="4">
    <location>
        <begin position="546"/>
        <end position="551"/>
    </location>
</feature>
<feature type="strand" evidence="4">
    <location>
        <begin position="555"/>
        <end position="562"/>
    </location>
</feature>
<feature type="strand" evidence="4">
    <location>
        <begin position="565"/>
        <end position="571"/>
    </location>
</feature>
<feature type="turn" evidence="4">
    <location>
        <begin position="572"/>
        <end position="574"/>
    </location>
</feature>
<feature type="strand" evidence="4">
    <location>
        <begin position="577"/>
        <end position="582"/>
    </location>
</feature>
<feature type="strand" evidence="4">
    <location>
        <begin position="588"/>
        <end position="593"/>
    </location>
</feature>
<feature type="strand" evidence="4">
    <location>
        <begin position="597"/>
        <end position="604"/>
    </location>
</feature>
<feature type="strand" evidence="4">
    <location>
        <begin position="609"/>
        <end position="613"/>
    </location>
</feature>
<feature type="turn" evidence="4">
    <location>
        <begin position="614"/>
        <end position="617"/>
    </location>
</feature>
<feature type="strand" evidence="4">
    <location>
        <begin position="618"/>
        <end position="623"/>
    </location>
</feature>
<feature type="strand" evidence="4">
    <location>
        <begin position="630"/>
        <end position="635"/>
    </location>
</feature>
<feature type="strand" evidence="4">
    <location>
        <begin position="639"/>
        <end position="648"/>
    </location>
</feature>
<feature type="strand" evidence="4">
    <location>
        <begin position="651"/>
        <end position="654"/>
    </location>
</feature>
<feature type="turn" evidence="4">
    <location>
        <begin position="655"/>
        <end position="657"/>
    </location>
</feature>
<feature type="strand" evidence="4">
    <location>
        <begin position="660"/>
        <end position="663"/>
    </location>
</feature>
<feature type="strand" evidence="4">
    <location>
        <begin position="671"/>
        <end position="676"/>
    </location>
</feature>
<feature type="strand" evidence="4">
    <location>
        <begin position="680"/>
        <end position="687"/>
    </location>
</feature>
<feature type="strand" evidence="4">
    <location>
        <begin position="692"/>
        <end position="696"/>
    </location>
</feature>
<feature type="turn" evidence="4">
    <location>
        <begin position="697"/>
        <end position="699"/>
    </location>
</feature>
<feature type="strand" evidence="4">
    <location>
        <begin position="702"/>
        <end position="706"/>
    </location>
</feature>
<feature type="strand" evidence="4">
    <location>
        <begin position="715"/>
        <end position="718"/>
    </location>
</feature>
<feature type="strand" evidence="4">
    <location>
        <begin position="725"/>
        <end position="728"/>
    </location>
</feature>
<feature type="strand" evidence="4">
    <location>
        <begin position="732"/>
        <end position="737"/>
    </location>
</feature>
<gene>
    <name type="primary">pkwA</name>
    <name type="synonym">pkw1</name>
</gene>
<accession>P49695</accession>
<sequence length="742" mass="78950">MIEPLQPGDPGRIGPYRLVSRLGAGGMGQVFLARSPGGRPVVVKVILPEYANDDEYRIRFAREVEAARRVGGFHTAQVIDADPTADPPWMATAYIPGPSLRKAVTERGPLYGNNLRTLAAGLVEGLAAIHACGLVHRDFKPSNIVLAADGPRVIDFGVARPLDSSVMTQSGAVIGTLAYMSPEQTDGSQVGPASDVFSLGTVLAFAATGRSPFMADSIGEIIARISGPPPELPELPDDLRELVYACWEQNPDLRPTTAELLAQLSTDHTGDDWPPPHLSDLIGSMLPLGATTSPNPSLAIEPPPPSHGPPRPSEPLPDPGDDADEPSAEKPSRTLPEPEPPELEEKPIQVIHEPERPAPTPPRPREPARGAIKPKNPRPAAPQPPWSPPRVQPPRWKQLITKKPVAGILTAVATAGLVVSFLVWQWTLPETPLRPDSSTAPSESADPHELNEPRILTTDREAVAVAFSPGGSLLAGGSGDKLIHVWDVASGDELHTLEGHTDWVRAVAFSPDGALLASGSDDATVRLWDVAAAEERAVFEGHTHYVLDIAFSPDGSMVASGSRDGTARLWNVATGTEHAVLKGHTDYVYAVAFSPDGSMVASGSRDGTIRLWDVATGKERDVLQAPAENVVSLAFSPDGSMLVHGSDSTVHLWDVASGEALHTFEGHTDWVRAVAFSPDGALLASGSDDRTIRLWDVAAQEEHTTLEGHTEPVHSVAFHPEGTTLASASEDGTIRIWPIATE</sequence>
<keyword id="KW-0002">3D-structure</keyword>
<keyword id="KW-0067">ATP-binding</keyword>
<keyword id="KW-0418">Kinase</keyword>
<keyword id="KW-0547">Nucleotide-binding</keyword>
<keyword id="KW-0677">Repeat</keyword>
<keyword id="KW-0723">Serine/threonine-protein kinase</keyword>
<keyword id="KW-0808">Transferase</keyword>
<keyword id="KW-0853">WD repeat</keyword>
<comment type="function">
    <text>May play a regulatory role during the complex growth cycle and in secondary metabolite production.</text>
</comment>
<comment type="catalytic activity">
    <reaction>
        <text>L-seryl-[protein] + ATP = O-phospho-L-seryl-[protein] + ADP + H(+)</text>
        <dbReference type="Rhea" id="RHEA:17989"/>
        <dbReference type="Rhea" id="RHEA-COMP:9863"/>
        <dbReference type="Rhea" id="RHEA-COMP:11604"/>
        <dbReference type="ChEBI" id="CHEBI:15378"/>
        <dbReference type="ChEBI" id="CHEBI:29999"/>
        <dbReference type="ChEBI" id="CHEBI:30616"/>
        <dbReference type="ChEBI" id="CHEBI:83421"/>
        <dbReference type="ChEBI" id="CHEBI:456216"/>
        <dbReference type="EC" id="2.7.11.1"/>
    </reaction>
</comment>
<comment type="catalytic activity">
    <reaction>
        <text>L-threonyl-[protein] + ATP = O-phospho-L-threonyl-[protein] + ADP + H(+)</text>
        <dbReference type="Rhea" id="RHEA:46608"/>
        <dbReference type="Rhea" id="RHEA-COMP:11060"/>
        <dbReference type="Rhea" id="RHEA-COMP:11605"/>
        <dbReference type="ChEBI" id="CHEBI:15378"/>
        <dbReference type="ChEBI" id="CHEBI:30013"/>
        <dbReference type="ChEBI" id="CHEBI:30616"/>
        <dbReference type="ChEBI" id="CHEBI:61977"/>
        <dbReference type="ChEBI" id="CHEBI:456216"/>
        <dbReference type="EC" id="2.7.11.1"/>
    </reaction>
</comment>
<comment type="similarity">
    <text evidence="1">Belongs to the protein kinase superfamily. Ser/Thr protein kinase family.</text>
</comment>
<proteinExistence type="evidence at protein level"/>
<protein>
    <recommendedName>
        <fullName>Probable serine/threonine-protein kinase PkwA</fullName>
        <ecNumber>2.7.11.1</ecNumber>
    </recommendedName>
</protein>
<evidence type="ECO:0000255" key="1">
    <source>
        <dbReference type="PROSITE-ProRule" id="PRU00159"/>
    </source>
</evidence>
<evidence type="ECO:0000255" key="2">
    <source>
        <dbReference type="PROSITE-ProRule" id="PRU10027"/>
    </source>
</evidence>
<evidence type="ECO:0000256" key="3">
    <source>
        <dbReference type="SAM" id="MobiDB-lite"/>
    </source>
</evidence>
<evidence type="ECO:0007829" key="4">
    <source>
        <dbReference type="PDB" id="5YZV"/>
    </source>
</evidence>
<name>PKWA_THECU</name>
<reference key="1">
    <citation type="journal article" date="1996" name="J. Bacteriol.">
        <title>A deduced Thermomonospora curvata protein containing serine/threonine protein kinase and WD-repeat domains.</title>
        <authorList>
            <person name="Janda L."/>
            <person name="Tichy P."/>
            <person name="Spizek J."/>
            <person name="Petricek M."/>
        </authorList>
    </citation>
    <scope>NUCLEOTIDE SEQUENCE [GENOMIC DNA]</scope>
    <source>
        <strain>CCM 3352</strain>
    </source>
</reference>
<dbReference type="EC" id="2.7.11.1"/>
<dbReference type="EMBL" id="AF115313">
    <property type="protein sequence ID" value="AAB05822.1"/>
    <property type="molecule type" value="Genomic_DNA"/>
</dbReference>
<dbReference type="PDB" id="5YZV">
    <property type="method" value="X-ray"/>
    <property type="resolution" value="2.60 A"/>
    <property type="chains" value="A/B/C/D/E=441-742"/>
</dbReference>
<dbReference type="PDBsum" id="5YZV"/>
<dbReference type="SMR" id="P49695"/>
<dbReference type="GO" id="GO:0005524">
    <property type="term" value="F:ATP binding"/>
    <property type="evidence" value="ECO:0007669"/>
    <property type="project" value="UniProtKB-KW"/>
</dbReference>
<dbReference type="GO" id="GO:0106310">
    <property type="term" value="F:protein serine kinase activity"/>
    <property type="evidence" value="ECO:0007669"/>
    <property type="project" value="RHEA"/>
</dbReference>
<dbReference type="GO" id="GO:0004674">
    <property type="term" value="F:protein serine/threonine kinase activity"/>
    <property type="evidence" value="ECO:0007669"/>
    <property type="project" value="UniProtKB-KW"/>
</dbReference>
<dbReference type="CDD" id="cd14014">
    <property type="entry name" value="STKc_PknB_like"/>
    <property type="match status" value="1"/>
</dbReference>
<dbReference type="CDD" id="cd00200">
    <property type="entry name" value="WD40"/>
    <property type="match status" value="1"/>
</dbReference>
<dbReference type="Gene3D" id="3.30.200.20">
    <property type="entry name" value="Phosphorylase Kinase, domain 1"/>
    <property type="match status" value="1"/>
</dbReference>
<dbReference type="Gene3D" id="1.10.510.10">
    <property type="entry name" value="Transferase(Phosphotransferase) domain 1"/>
    <property type="match status" value="1"/>
</dbReference>
<dbReference type="Gene3D" id="2.130.10.10">
    <property type="entry name" value="YVTN repeat-like/Quinoprotein amine dehydrogenase"/>
    <property type="match status" value="3"/>
</dbReference>
<dbReference type="InterPro" id="IPR020472">
    <property type="entry name" value="G-protein_beta_WD-40_rep"/>
</dbReference>
<dbReference type="InterPro" id="IPR011009">
    <property type="entry name" value="Kinase-like_dom_sf"/>
</dbReference>
<dbReference type="InterPro" id="IPR000719">
    <property type="entry name" value="Prot_kinase_dom"/>
</dbReference>
<dbReference type="InterPro" id="IPR017441">
    <property type="entry name" value="Protein_kinase_ATP_BS"/>
</dbReference>
<dbReference type="InterPro" id="IPR008271">
    <property type="entry name" value="Ser/Thr_kinase_AS"/>
</dbReference>
<dbReference type="InterPro" id="IPR015943">
    <property type="entry name" value="WD40/YVTN_repeat-like_dom_sf"/>
</dbReference>
<dbReference type="InterPro" id="IPR019775">
    <property type="entry name" value="WD40_repeat_CS"/>
</dbReference>
<dbReference type="InterPro" id="IPR036322">
    <property type="entry name" value="WD40_repeat_dom_sf"/>
</dbReference>
<dbReference type="InterPro" id="IPR001680">
    <property type="entry name" value="WD40_rpt"/>
</dbReference>
<dbReference type="PANTHER" id="PTHR22847:SF637">
    <property type="entry name" value="WD REPEAT DOMAIN 5B"/>
    <property type="match status" value="1"/>
</dbReference>
<dbReference type="PANTHER" id="PTHR22847">
    <property type="entry name" value="WD40 REPEAT PROTEIN"/>
    <property type="match status" value="1"/>
</dbReference>
<dbReference type="Pfam" id="PF00069">
    <property type="entry name" value="Pkinase"/>
    <property type="match status" value="1"/>
</dbReference>
<dbReference type="Pfam" id="PF00400">
    <property type="entry name" value="WD40"/>
    <property type="match status" value="7"/>
</dbReference>
<dbReference type="PRINTS" id="PR00320">
    <property type="entry name" value="GPROTEINBRPT"/>
</dbReference>
<dbReference type="SMART" id="SM00320">
    <property type="entry name" value="WD40"/>
    <property type="match status" value="7"/>
</dbReference>
<dbReference type="SUPFAM" id="SSF56112">
    <property type="entry name" value="Protein kinase-like (PK-like)"/>
    <property type="match status" value="1"/>
</dbReference>
<dbReference type="SUPFAM" id="SSF50978">
    <property type="entry name" value="WD40 repeat-like"/>
    <property type="match status" value="1"/>
</dbReference>
<dbReference type="PROSITE" id="PS00107">
    <property type="entry name" value="PROTEIN_KINASE_ATP"/>
    <property type="match status" value="1"/>
</dbReference>
<dbReference type="PROSITE" id="PS50011">
    <property type="entry name" value="PROTEIN_KINASE_DOM"/>
    <property type="match status" value="1"/>
</dbReference>
<dbReference type="PROSITE" id="PS00108">
    <property type="entry name" value="PROTEIN_KINASE_ST"/>
    <property type="match status" value="1"/>
</dbReference>
<dbReference type="PROSITE" id="PS00678">
    <property type="entry name" value="WD_REPEATS_1"/>
    <property type="match status" value="5"/>
</dbReference>
<dbReference type="PROSITE" id="PS50082">
    <property type="entry name" value="WD_REPEATS_2"/>
    <property type="match status" value="7"/>
</dbReference>
<dbReference type="PROSITE" id="PS50294">
    <property type="entry name" value="WD_REPEATS_REGION"/>
    <property type="match status" value="1"/>
</dbReference>